<accession>B7ICR5</accession>
<comment type="function">
    <text evidence="1">Forms part of the ribosomal stalk, playing a central role in the interaction of the ribosome with GTP-bound translation factors.</text>
</comment>
<comment type="subunit">
    <text evidence="1">Part of the ribosomal stalk of the 50S ribosomal subunit. The N-terminus interacts with L11 and the large rRNA to form the base of the stalk. The C-terminus forms an elongated spine to which L12 dimers bind in a sequential fashion forming a multimeric L10(L12)X complex.</text>
</comment>
<comment type="similarity">
    <text evidence="1">Belongs to the universal ribosomal protein uL10 family.</text>
</comment>
<dbReference type="EMBL" id="CP001185">
    <property type="protein sequence ID" value="ACJ75792.1"/>
    <property type="molecule type" value="Genomic_DNA"/>
</dbReference>
<dbReference type="RefSeq" id="WP_012580164.1">
    <property type="nucleotide sequence ID" value="NC_011653.1"/>
</dbReference>
<dbReference type="SMR" id="B7ICR5"/>
<dbReference type="STRING" id="484019.THA_1347"/>
<dbReference type="KEGG" id="taf:THA_1347"/>
<dbReference type="eggNOG" id="COG0244">
    <property type="taxonomic scope" value="Bacteria"/>
</dbReference>
<dbReference type="HOGENOM" id="CLU_092227_1_2_0"/>
<dbReference type="OrthoDB" id="9808307at2"/>
<dbReference type="Proteomes" id="UP000002453">
    <property type="component" value="Chromosome"/>
</dbReference>
<dbReference type="GO" id="GO:0015934">
    <property type="term" value="C:large ribosomal subunit"/>
    <property type="evidence" value="ECO:0007669"/>
    <property type="project" value="InterPro"/>
</dbReference>
<dbReference type="GO" id="GO:0070180">
    <property type="term" value="F:large ribosomal subunit rRNA binding"/>
    <property type="evidence" value="ECO:0007669"/>
    <property type="project" value="UniProtKB-UniRule"/>
</dbReference>
<dbReference type="GO" id="GO:0003735">
    <property type="term" value="F:structural constituent of ribosome"/>
    <property type="evidence" value="ECO:0007669"/>
    <property type="project" value="InterPro"/>
</dbReference>
<dbReference type="GO" id="GO:0006412">
    <property type="term" value="P:translation"/>
    <property type="evidence" value="ECO:0007669"/>
    <property type="project" value="UniProtKB-UniRule"/>
</dbReference>
<dbReference type="CDD" id="cd05797">
    <property type="entry name" value="Ribosomal_L10"/>
    <property type="match status" value="1"/>
</dbReference>
<dbReference type="Gene3D" id="3.30.70.1730">
    <property type="match status" value="1"/>
</dbReference>
<dbReference type="Gene3D" id="6.10.250.290">
    <property type="match status" value="1"/>
</dbReference>
<dbReference type="HAMAP" id="MF_00362">
    <property type="entry name" value="Ribosomal_uL10"/>
    <property type="match status" value="1"/>
</dbReference>
<dbReference type="InterPro" id="IPR001790">
    <property type="entry name" value="Ribosomal_uL10"/>
</dbReference>
<dbReference type="InterPro" id="IPR043141">
    <property type="entry name" value="Ribosomal_uL10-like_sf"/>
</dbReference>
<dbReference type="InterPro" id="IPR022973">
    <property type="entry name" value="Ribosomal_uL10_bac"/>
</dbReference>
<dbReference type="InterPro" id="IPR047865">
    <property type="entry name" value="Ribosomal_uL10_bac_type"/>
</dbReference>
<dbReference type="InterPro" id="IPR002363">
    <property type="entry name" value="Ribosomal_uL10_CS_bac"/>
</dbReference>
<dbReference type="NCBIfam" id="NF000955">
    <property type="entry name" value="PRK00099.1-1"/>
    <property type="match status" value="1"/>
</dbReference>
<dbReference type="PANTHER" id="PTHR11560">
    <property type="entry name" value="39S RIBOSOMAL PROTEIN L10, MITOCHONDRIAL"/>
    <property type="match status" value="1"/>
</dbReference>
<dbReference type="Pfam" id="PF00466">
    <property type="entry name" value="Ribosomal_L10"/>
    <property type="match status" value="1"/>
</dbReference>
<dbReference type="SUPFAM" id="SSF160369">
    <property type="entry name" value="Ribosomal protein L10-like"/>
    <property type="match status" value="1"/>
</dbReference>
<dbReference type="PROSITE" id="PS01109">
    <property type="entry name" value="RIBOSOMAL_L10"/>
    <property type="match status" value="1"/>
</dbReference>
<protein>
    <recommendedName>
        <fullName evidence="1">Large ribosomal subunit protein uL10</fullName>
    </recommendedName>
    <alternativeName>
        <fullName evidence="2">50S ribosomal protein L10</fullName>
    </alternativeName>
</protein>
<reference key="1">
    <citation type="journal article" date="2009" name="J. Bacteriol.">
        <title>The genome of Thermosipho africanus TCF52B: lateral genetic connections to the Firmicutes and Archaea.</title>
        <authorList>
            <person name="Nesboe C.L."/>
            <person name="Bapteste E."/>
            <person name="Curtis B."/>
            <person name="Dahle H."/>
            <person name="Lopez P."/>
            <person name="Macleod D."/>
            <person name="Dlutek M."/>
            <person name="Bowman S."/>
            <person name="Zhaxybayeva O."/>
            <person name="Birkeland N.-K."/>
            <person name="Doolittle W.F."/>
        </authorList>
    </citation>
    <scope>NUCLEOTIDE SEQUENCE [LARGE SCALE GENOMIC DNA]</scope>
    <source>
        <strain>TCF52B</strain>
    </source>
</reference>
<feature type="chain" id="PRO_1000121025" description="Large ribosomal subunit protein uL10">
    <location>
        <begin position="1"/>
        <end position="180"/>
    </location>
</feature>
<gene>
    <name evidence="1" type="primary">rplJ</name>
    <name type="ordered locus">THA_1347</name>
</gene>
<name>RL10_THEAB</name>
<organism>
    <name type="scientific">Thermosipho africanus (strain TCF52B)</name>
    <dbReference type="NCBI Taxonomy" id="484019"/>
    <lineage>
        <taxon>Bacteria</taxon>
        <taxon>Thermotogati</taxon>
        <taxon>Thermotogota</taxon>
        <taxon>Thermotogae</taxon>
        <taxon>Thermotogales</taxon>
        <taxon>Fervidobacteriaceae</taxon>
        <taxon>Thermosipho</taxon>
    </lineage>
</organism>
<keyword id="KW-1185">Reference proteome</keyword>
<keyword id="KW-0687">Ribonucleoprotein</keyword>
<keyword id="KW-0689">Ribosomal protein</keyword>
<keyword id="KW-0694">RNA-binding</keyword>
<keyword id="KW-0699">rRNA-binding</keyword>
<evidence type="ECO:0000255" key="1">
    <source>
        <dbReference type="HAMAP-Rule" id="MF_00362"/>
    </source>
</evidence>
<evidence type="ECO:0000305" key="2"/>
<sequence length="180" mass="20038">MLTRAQKEQLVKELSEVFKNSSLILFSDYKGLNVAQITDLRKKLREKLADGARYKVIKNSVAYLALKEAGYNVEEIEDVFSGPLAILYVEDGDPIEAIKVIYDFSKEMKGIPSFKGLYLDGKFFSADEVENLSKLPSKEQLLAMVVSGVQGPIRGLVNVLSGTLKNLLYALNAIKDKKSE</sequence>
<proteinExistence type="inferred from homology"/>